<comment type="function">
    <text evidence="1">Core subunit of the mitochondrial membrane respiratory chain NADH dehydrogenase (Complex I) that is believed to belong to the minimal assembly required for catalysis. Complex I functions in the transfer of electrons from NADH to the respiratory chain. The immediate electron acceptor for the enzyme is believed to be ubiquinone (By similarity).</text>
</comment>
<comment type="catalytic activity">
    <reaction>
        <text>a ubiquinone + NADH + 5 H(+)(in) = a ubiquinol + NAD(+) + 4 H(+)(out)</text>
        <dbReference type="Rhea" id="RHEA:29091"/>
        <dbReference type="Rhea" id="RHEA-COMP:9565"/>
        <dbReference type="Rhea" id="RHEA-COMP:9566"/>
        <dbReference type="ChEBI" id="CHEBI:15378"/>
        <dbReference type="ChEBI" id="CHEBI:16389"/>
        <dbReference type="ChEBI" id="CHEBI:17976"/>
        <dbReference type="ChEBI" id="CHEBI:57540"/>
        <dbReference type="ChEBI" id="CHEBI:57945"/>
        <dbReference type="EC" id="7.1.1.2"/>
    </reaction>
</comment>
<comment type="subcellular location">
    <subcellularLocation>
        <location evidence="1">Mitochondrion membrane</location>
        <topology evidence="1">Multi-pass membrane protein</topology>
    </subcellularLocation>
</comment>
<comment type="similarity">
    <text evidence="3">Belongs to the complex I subunit 4L family.</text>
</comment>
<sequence length="99" mass="10745">MLLEIITAYKIGTILFLIGILGFIINRQNILLLIISIEMTLLAISFIIICSALFLDDSAAACFSLYILALAGSEAAIGLSLLVLFHRFRGSVLISASRQ</sequence>
<geneLocation type="mitochondrion"/>
<accession>Q37403</accession>
<reference key="1">
    <citation type="journal article" date="1996" name="J. Mol. Biol.">
        <title>The mitochondrial DNA of Allomyces macrogynus: the complete genomic sequence from an ancestral fungus.</title>
        <authorList>
            <person name="Paquin B."/>
            <person name="Lang B.F."/>
        </authorList>
    </citation>
    <scope>NUCLEOTIDE SEQUENCE [GENOMIC DNA]</scope>
</reference>
<organism>
    <name type="scientific">Allomyces macrogynus</name>
    <dbReference type="NCBI Taxonomy" id="28583"/>
    <lineage>
        <taxon>Eukaryota</taxon>
        <taxon>Fungi</taxon>
        <taxon>Fungi incertae sedis</taxon>
        <taxon>Blastocladiomycota</taxon>
        <taxon>Blastocladiomycetes</taxon>
        <taxon>Blastocladiales</taxon>
        <taxon>Blastocladiaceae</taxon>
        <taxon>Allomyces</taxon>
    </lineage>
</organism>
<evidence type="ECO:0000250" key="1"/>
<evidence type="ECO:0000255" key="2"/>
<evidence type="ECO:0000305" key="3"/>
<proteinExistence type="inferred from homology"/>
<protein>
    <recommendedName>
        <fullName>NADH-ubiquinone oxidoreductase chain 4L</fullName>
        <ecNumber>7.1.1.2</ecNumber>
    </recommendedName>
    <alternativeName>
        <fullName>NADH dehydrogenase subunit 4L</fullName>
    </alternativeName>
</protein>
<name>NU4LM_ALLMA</name>
<gene>
    <name type="primary">ND4L</name>
    <name type="synonym">NAD4L</name>
</gene>
<feature type="chain" id="PRO_0000118382" description="NADH-ubiquinone oxidoreductase chain 4L">
    <location>
        <begin position="1"/>
        <end position="99"/>
    </location>
</feature>
<feature type="transmembrane region" description="Helical" evidence="2">
    <location>
        <begin position="5"/>
        <end position="25"/>
    </location>
</feature>
<feature type="transmembrane region" description="Helical" evidence="2">
    <location>
        <begin position="30"/>
        <end position="50"/>
    </location>
</feature>
<feature type="transmembrane region" description="Helical" evidence="2">
    <location>
        <begin position="65"/>
        <end position="85"/>
    </location>
</feature>
<dbReference type="EC" id="7.1.1.2"/>
<dbReference type="EMBL" id="U41288">
    <property type="protein sequence ID" value="AAC49245.1"/>
    <property type="molecule type" value="Genomic_DNA"/>
</dbReference>
<dbReference type="PIR" id="S63662">
    <property type="entry name" value="S63662"/>
</dbReference>
<dbReference type="RefSeq" id="NP_043744.1">
    <property type="nucleotide sequence ID" value="NC_001715.1"/>
</dbReference>
<dbReference type="SMR" id="Q37403"/>
<dbReference type="GeneID" id="801851"/>
<dbReference type="VEuPathDB" id="FungiDB:AlmafMp25"/>
<dbReference type="GO" id="GO:0031966">
    <property type="term" value="C:mitochondrial membrane"/>
    <property type="evidence" value="ECO:0007669"/>
    <property type="project" value="UniProtKB-SubCell"/>
</dbReference>
<dbReference type="GO" id="GO:0030964">
    <property type="term" value="C:NADH dehydrogenase complex"/>
    <property type="evidence" value="ECO:0007669"/>
    <property type="project" value="TreeGrafter"/>
</dbReference>
<dbReference type="GO" id="GO:0008137">
    <property type="term" value="F:NADH dehydrogenase (ubiquinone) activity"/>
    <property type="evidence" value="ECO:0007669"/>
    <property type="project" value="UniProtKB-EC"/>
</dbReference>
<dbReference type="GO" id="GO:0042773">
    <property type="term" value="P:ATP synthesis coupled electron transport"/>
    <property type="evidence" value="ECO:0007669"/>
    <property type="project" value="InterPro"/>
</dbReference>
<dbReference type="Gene3D" id="1.10.287.3510">
    <property type="match status" value="1"/>
</dbReference>
<dbReference type="InterPro" id="IPR001133">
    <property type="entry name" value="NADH_UbQ_OxRdtase_chain4L/K"/>
</dbReference>
<dbReference type="InterPro" id="IPR039428">
    <property type="entry name" value="NUOK/Mnh_C1-like"/>
</dbReference>
<dbReference type="PANTHER" id="PTHR11434:SF16">
    <property type="entry name" value="NADH-UBIQUINONE OXIDOREDUCTASE CHAIN 4L"/>
    <property type="match status" value="1"/>
</dbReference>
<dbReference type="PANTHER" id="PTHR11434">
    <property type="entry name" value="NADH-UBIQUINONE OXIDOREDUCTASE SUBUNIT ND4L"/>
    <property type="match status" value="1"/>
</dbReference>
<dbReference type="Pfam" id="PF00420">
    <property type="entry name" value="Oxidored_q2"/>
    <property type="match status" value="1"/>
</dbReference>
<keyword id="KW-0249">Electron transport</keyword>
<keyword id="KW-0472">Membrane</keyword>
<keyword id="KW-0496">Mitochondrion</keyword>
<keyword id="KW-0520">NAD</keyword>
<keyword id="KW-0679">Respiratory chain</keyword>
<keyword id="KW-1278">Translocase</keyword>
<keyword id="KW-0812">Transmembrane</keyword>
<keyword id="KW-1133">Transmembrane helix</keyword>
<keyword id="KW-0813">Transport</keyword>
<keyword id="KW-0830">Ubiquinone</keyword>